<reference key="1">
    <citation type="journal article" date="2008" name="J. Bacteriol.">
        <title>Genome sequence of the chemolithoautotrophic bacterium Oligotropha carboxidovorans OM5T.</title>
        <authorList>
            <person name="Paul D."/>
            <person name="Bridges S."/>
            <person name="Burgess S.C."/>
            <person name="Dandass Y."/>
            <person name="Lawrence M.L."/>
        </authorList>
    </citation>
    <scope>NUCLEOTIDE SEQUENCE [LARGE SCALE GENOMIC DNA]</scope>
    <source>
        <strain>ATCC 49405 / DSM 1227 / KCTC 32145 / OM5</strain>
    </source>
</reference>
<reference key="2">
    <citation type="journal article" date="2011" name="J. Bacteriol.">
        <title>Complete genome sequences of the chemolithoautotrophic Oligotropha carboxidovorans strains OM4 and OM5.</title>
        <authorList>
            <person name="Volland S."/>
            <person name="Rachinger M."/>
            <person name="Strittmatter A."/>
            <person name="Daniel R."/>
            <person name="Gottschalk G."/>
            <person name="Meyer O."/>
        </authorList>
    </citation>
    <scope>NUCLEOTIDE SEQUENCE [LARGE SCALE GENOMIC DNA]</scope>
    <source>
        <strain>ATCC 49405 / DSM 1227 / KCTC 32145 / OM5</strain>
    </source>
</reference>
<keyword id="KW-0963">Cytoplasm</keyword>
<keyword id="KW-1185">Reference proteome</keyword>
<keyword id="KW-0690">Ribosome biogenesis</keyword>
<dbReference type="EMBL" id="CP001196">
    <property type="protein sequence ID" value="ACI91657.1"/>
    <property type="molecule type" value="Genomic_DNA"/>
</dbReference>
<dbReference type="EMBL" id="CP002826">
    <property type="protein sequence ID" value="AEI04758.1"/>
    <property type="molecule type" value="Genomic_DNA"/>
</dbReference>
<dbReference type="RefSeq" id="WP_012561688.1">
    <property type="nucleotide sequence ID" value="NC_015684.1"/>
</dbReference>
<dbReference type="SMR" id="B6JCS7"/>
<dbReference type="STRING" id="504832.OCA5_c00240"/>
<dbReference type="KEGG" id="oca:OCAR_4512"/>
<dbReference type="KEGG" id="ocg:OCA5_c00240"/>
<dbReference type="PATRIC" id="fig|504832.7.peg.26"/>
<dbReference type="eggNOG" id="COG0779">
    <property type="taxonomic scope" value="Bacteria"/>
</dbReference>
<dbReference type="HOGENOM" id="CLU_070525_0_0_5"/>
<dbReference type="OrthoDB" id="9805006at2"/>
<dbReference type="Proteomes" id="UP000007730">
    <property type="component" value="Chromosome"/>
</dbReference>
<dbReference type="GO" id="GO:0005829">
    <property type="term" value="C:cytosol"/>
    <property type="evidence" value="ECO:0007669"/>
    <property type="project" value="TreeGrafter"/>
</dbReference>
<dbReference type="GO" id="GO:0000028">
    <property type="term" value="P:ribosomal small subunit assembly"/>
    <property type="evidence" value="ECO:0007669"/>
    <property type="project" value="TreeGrafter"/>
</dbReference>
<dbReference type="GO" id="GO:0006412">
    <property type="term" value="P:translation"/>
    <property type="evidence" value="ECO:0007669"/>
    <property type="project" value="TreeGrafter"/>
</dbReference>
<dbReference type="CDD" id="cd01734">
    <property type="entry name" value="YlxS_C"/>
    <property type="match status" value="1"/>
</dbReference>
<dbReference type="Gene3D" id="2.30.30.180">
    <property type="entry name" value="Ribosome maturation factor RimP, C-terminal domain"/>
    <property type="match status" value="1"/>
</dbReference>
<dbReference type="Gene3D" id="3.30.300.70">
    <property type="entry name" value="RimP-like superfamily, N-terminal"/>
    <property type="match status" value="1"/>
</dbReference>
<dbReference type="HAMAP" id="MF_01077">
    <property type="entry name" value="RimP"/>
    <property type="match status" value="1"/>
</dbReference>
<dbReference type="InterPro" id="IPR003728">
    <property type="entry name" value="Ribosome_maturation_RimP"/>
</dbReference>
<dbReference type="InterPro" id="IPR028998">
    <property type="entry name" value="RimP_C"/>
</dbReference>
<dbReference type="InterPro" id="IPR036847">
    <property type="entry name" value="RimP_C_sf"/>
</dbReference>
<dbReference type="InterPro" id="IPR028989">
    <property type="entry name" value="RimP_N"/>
</dbReference>
<dbReference type="InterPro" id="IPR035956">
    <property type="entry name" value="RimP_N_sf"/>
</dbReference>
<dbReference type="NCBIfam" id="NF000932">
    <property type="entry name" value="PRK00092.2-5"/>
    <property type="match status" value="1"/>
</dbReference>
<dbReference type="NCBIfam" id="NF000933">
    <property type="entry name" value="PRK00092.2-6"/>
    <property type="match status" value="1"/>
</dbReference>
<dbReference type="PANTHER" id="PTHR33867">
    <property type="entry name" value="RIBOSOME MATURATION FACTOR RIMP"/>
    <property type="match status" value="1"/>
</dbReference>
<dbReference type="PANTHER" id="PTHR33867:SF1">
    <property type="entry name" value="RIBOSOME MATURATION FACTOR RIMP"/>
    <property type="match status" value="1"/>
</dbReference>
<dbReference type="Pfam" id="PF17384">
    <property type="entry name" value="DUF150_C"/>
    <property type="match status" value="1"/>
</dbReference>
<dbReference type="Pfam" id="PF02576">
    <property type="entry name" value="RimP_N"/>
    <property type="match status" value="1"/>
</dbReference>
<dbReference type="SUPFAM" id="SSF74942">
    <property type="entry name" value="YhbC-like, C-terminal domain"/>
    <property type="match status" value="1"/>
</dbReference>
<dbReference type="SUPFAM" id="SSF75420">
    <property type="entry name" value="YhbC-like, N-terminal domain"/>
    <property type="match status" value="1"/>
</dbReference>
<feature type="chain" id="PRO_1000136783" description="Ribosome maturation factor RimP">
    <location>
        <begin position="1"/>
        <end position="260"/>
    </location>
</feature>
<feature type="region of interest" description="Disordered" evidence="2">
    <location>
        <begin position="189"/>
        <end position="260"/>
    </location>
</feature>
<feature type="compositionally biased region" description="Basic and acidic residues" evidence="2">
    <location>
        <begin position="189"/>
        <end position="199"/>
    </location>
</feature>
<feature type="compositionally biased region" description="Basic and acidic residues" evidence="2">
    <location>
        <begin position="215"/>
        <end position="227"/>
    </location>
</feature>
<feature type="compositionally biased region" description="Basic residues" evidence="2">
    <location>
        <begin position="228"/>
        <end position="242"/>
    </location>
</feature>
<organism>
    <name type="scientific">Afipia carboxidovorans (strain ATCC 49405 / DSM 1227 / KCTC 32145 / OM5)</name>
    <name type="common">Oligotropha carboxidovorans</name>
    <dbReference type="NCBI Taxonomy" id="504832"/>
    <lineage>
        <taxon>Bacteria</taxon>
        <taxon>Pseudomonadati</taxon>
        <taxon>Pseudomonadota</taxon>
        <taxon>Alphaproteobacteria</taxon>
        <taxon>Hyphomicrobiales</taxon>
        <taxon>Nitrobacteraceae</taxon>
        <taxon>Afipia</taxon>
    </lineage>
</organism>
<protein>
    <recommendedName>
        <fullName evidence="1">Ribosome maturation factor RimP</fullName>
    </recommendedName>
</protein>
<accession>B6JCS7</accession>
<accession>F8BZM4</accession>
<gene>
    <name evidence="1" type="primary">rimP</name>
    <name type="ordered locus">OCAR_4512</name>
    <name type="ordered locus">OCA5_c00240</name>
</gene>
<name>RIMP_AFIC5</name>
<comment type="function">
    <text evidence="1">Required for maturation of 30S ribosomal subunits.</text>
</comment>
<comment type="subcellular location">
    <subcellularLocation>
        <location evidence="1">Cytoplasm</location>
    </subcellularLocation>
</comment>
<comment type="similarity">
    <text evidence="1">Belongs to the RimP family.</text>
</comment>
<sequence>MTEPAFFPETATSTAEPRLVVEPGVAARVAAIAEPVLEGLGYRLVRIKISGEAGCTVQIMAERPDGTMLIDDCEAVSKALSPVMDVADPIQRAYRLEISSPGIDRPLVRQSDFERYTGHLVKIEMAAPHEGRKRFRGTLQGIEDNLVRITRDDAKSHEGAQPADARLPLADIASAHLVLTDQLIAESMRRGRDAEREQLENAGVLPPPPPHAKKAREMRDKAGPRKEKTAKKPLPKNTKAHRLAADAKRRQTTSDPHQGE</sequence>
<evidence type="ECO:0000255" key="1">
    <source>
        <dbReference type="HAMAP-Rule" id="MF_01077"/>
    </source>
</evidence>
<evidence type="ECO:0000256" key="2">
    <source>
        <dbReference type="SAM" id="MobiDB-lite"/>
    </source>
</evidence>
<proteinExistence type="inferred from homology"/>